<name>CH10_STRSL</name>
<comment type="function">
    <text evidence="1">Together with the chaperonin GroEL, plays an essential role in assisting protein folding. The GroEL-GroES system forms a nano-cage that allows encapsulation of the non-native substrate proteins and provides a physical environment optimized to promote and accelerate protein folding. GroES binds to the apical surface of the GroEL ring, thereby capping the opening of the GroEL channel.</text>
</comment>
<comment type="subunit">
    <text evidence="1">Heptamer of 7 subunits arranged in a ring. Interacts with the chaperonin GroEL.</text>
</comment>
<comment type="subcellular location">
    <subcellularLocation>
        <location evidence="1">Cytoplasm</location>
    </subcellularLocation>
</comment>
<comment type="similarity">
    <text evidence="1">Belongs to the GroES chaperonin family.</text>
</comment>
<organism>
    <name type="scientific">Streptococcus salivarius</name>
    <dbReference type="NCBI Taxonomy" id="1304"/>
    <lineage>
        <taxon>Bacteria</taxon>
        <taxon>Bacillati</taxon>
        <taxon>Bacillota</taxon>
        <taxon>Bacilli</taxon>
        <taxon>Lactobacillales</taxon>
        <taxon>Streptococcaceae</taxon>
        <taxon>Streptococcus</taxon>
    </lineage>
</organism>
<accession>Q8KJ09</accession>
<reference key="1">
    <citation type="submission" date="2001-06" db="EMBL/GenBank/DDBJ databases">
        <title>The groESL genes of Streptococcus salivarius.</title>
        <authorList>
            <person name="Teng L.-J."/>
        </authorList>
    </citation>
    <scope>NUCLEOTIDE SEQUENCE [GENOMIC DNA]</scope>
</reference>
<feature type="chain" id="PRO_0000174873" description="Co-chaperonin GroES">
    <location>
        <begin position="1"/>
        <end position="95"/>
    </location>
</feature>
<keyword id="KW-0143">Chaperone</keyword>
<keyword id="KW-0963">Cytoplasm</keyword>
<proteinExistence type="inferred from homology"/>
<dbReference type="EMBL" id="AF389517">
    <property type="protein sequence ID" value="AAM73647.1"/>
    <property type="molecule type" value="Genomic_DNA"/>
</dbReference>
<dbReference type="RefSeq" id="WP_060775843.1">
    <property type="nucleotide sequence ID" value="NZ_QRSW01000003.1"/>
</dbReference>
<dbReference type="SMR" id="Q8KJ09"/>
<dbReference type="STRING" id="1304.HMPREF3219_0200152"/>
<dbReference type="GO" id="GO:0005737">
    <property type="term" value="C:cytoplasm"/>
    <property type="evidence" value="ECO:0007669"/>
    <property type="project" value="UniProtKB-SubCell"/>
</dbReference>
<dbReference type="GO" id="GO:0005524">
    <property type="term" value="F:ATP binding"/>
    <property type="evidence" value="ECO:0007669"/>
    <property type="project" value="InterPro"/>
</dbReference>
<dbReference type="GO" id="GO:0046872">
    <property type="term" value="F:metal ion binding"/>
    <property type="evidence" value="ECO:0007669"/>
    <property type="project" value="TreeGrafter"/>
</dbReference>
<dbReference type="GO" id="GO:0044183">
    <property type="term" value="F:protein folding chaperone"/>
    <property type="evidence" value="ECO:0007669"/>
    <property type="project" value="InterPro"/>
</dbReference>
<dbReference type="GO" id="GO:0051087">
    <property type="term" value="F:protein-folding chaperone binding"/>
    <property type="evidence" value="ECO:0007669"/>
    <property type="project" value="TreeGrafter"/>
</dbReference>
<dbReference type="GO" id="GO:0051082">
    <property type="term" value="F:unfolded protein binding"/>
    <property type="evidence" value="ECO:0007669"/>
    <property type="project" value="TreeGrafter"/>
</dbReference>
<dbReference type="GO" id="GO:0051085">
    <property type="term" value="P:chaperone cofactor-dependent protein refolding"/>
    <property type="evidence" value="ECO:0007669"/>
    <property type="project" value="TreeGrafter"/>
</dbReference>
<dbReference type="CDD" id="cd00320">
    <property type="entry name" value="cpn10"/>
    <property type="match status" value="1"/>
</dbReference>
<dbReference type="FunFam" id="2.30.33.40:FF:000001">
    <property type="entry name" value="10 kDa chaperonin"/>
    <property type="match status" value="1"/>
</dbReference>
<dbReference type="Gene3D" id="2.30.33.40">
    <property type="entry name" value="GroES chaperonin"/>
    <property type="match status" value="1"/>
</dbReference>
<dbReference type="HAMAP" id="MF_00580">
    <property type="entry name" value="CH10"/>
    <property type="match status" value="1"/>
</dbReference>
<dbReference type="InterPro" id="IPR020818">
    <property type="entry name" value="Chaperonin_GroES"/>
</dbReference>
<dbReference type="InterPro" id="IPR037124">
    <property type="entry name" value="Chaperonin_GroES_sf"/>
</dbReference>
<dbReference type="InterPro" id="IPR011032">
    <property type="entry name" value="GroES-like_sf"/>
</dbReference>
<dbReference type="NCBIfam" id="NF001528">
    <property type="entry name" value="PRK00364.1-4"/>
    <property type="match status" value="1"/>
</dbReference>
<dbReference type="PANTHER" id="PTHR10772">
    <property type="entry name" value="10 KDA HEAT SHOCK PROTEIN"/>
    <property type="match status" value="1"/>
</dbReference>
<dbReference type="PANTHER" id="PTHR10772:SF58">
    <property type="entry name" value="CO-CHAPERONIN GROES"/>
    <property type="match status" value="1"/>
</dbReference>
<dbReference type="Pfam" id="PF00166">
    <property type="entry name" value="Cpn10"/>
    <property type="match status" value="1"/>
</dbReference>
<dbReference type="PRINTS" id="PR00297">
    <property type="entry name" value="CHAPERONIN10"/>
</dbReference>
<dbReference type="SMART" id="SM00883">
    <property type="entry name" value="Cpn10"/>
    <property type="match status" value="1"/>
</dbReference>
<dbReference type="SUPFAM" id="SSF50129">
    <property type="entry name" value="GroES-like"/>
    <property type="match status" value="1"/>
</dbReference>
<evidence type="ECO:0000255" key="1">
    <source>
        <dbReference type="HAMAP-Rule" id="MF_00580"/>
    </source>
</evidence>
<sequence length="95" mass="9742">MALKPLGDRIVVHFEETEEKTASGFVLAGASHEATKTAEVLAVGEGIRTLTGELIALSVAAGDKVLVENGAGVNVKDGDDSVSIIREADILAVLA</sequence>
<gene>
    <name evidence="1" type="primary">groES</name>
    <name evidence="1" type="synonym">groS</name>
</gene>
<protein>
    <recommendedName>
        <fullName evidence="1">Co-chaperonin GroES</fullName>
    </recommendedName>
    <alternativeName>
        <fullName evidence="1">10 kDa chaperonin</fullName>
    </alternativeName>
    <alternativeName>
        <fullName evidence="1">Chaperonin-10</fullName>
        <shortName evidence="1">Cpn10</shortName>
    </alternativeName>
</protein>